<comment type="function">
    <text evidence="1">Involved in the post-transcriptional modification of the uridine at the wobble position (U34) of tRNA(Lys), tRNA(Glu) and tRNA(Gln). Catalyzes the conversion of 2-thiouridine (S2U-RNA) to 2-selenouridine (Se2U-RNA). Acts in a two-step process involving geranylation of 2-thiouridine (S2U) to S-geranyl-2-thiouridine (geS2U) and subsequent selenation of the latter derivative to 2-selenouridine (Se2U) in the tRNA chain.</text>
</comment>
<comment type="catalytic activity">
    <reaction evidence="1">
        <text>5-methylaminomethyl-2-thiouridine(34) in tRNA + selenophosphate + (2E)-geranyl diphosphate + H2O + H(+) = 5-methylaminomethyl-2-selenouridine(34) in tRNA + (2E)-thiogeraniol + phosphate + diphosphate</text>
        <dbReference type="Rhea" id="RHEA:42716"/>
        <dbReference type="Rhea" id="RHEA-COMP:10195"/>
        <dbReference type="Rhea" id="RHEA-COMP:10196"/>
        <dbReference type="ChEBI" id="CHEBI:15377"/>
        <dbReference type="ChEBI" id="CHEBI:15378"/>
        <dbReference type="ChEBI" id="CHEBI:16144"/>
        <dbReference type="ChEBI" id="CHEBI:33019"/>
        <dbReference type="ChEBI" id="CHEBI:43474"/>
        <dbReference type="ChEBI" id="CHEBI:58057"/>
        <dbReference type="ChEBI" id="CHEBI:74455"/>
        <dbReference type="ChEBI" id="CHEBI:82743"/>
        <dbReference type="ChEBI" id="CHEBI:143703"/>
        <dbReference type="EC" id="2.9.1.3"/>
    </reaction>
    <physiologicalReaction direction="left-to-right" evidence="1">
        <dbReference type="Rhea" id="RHEA:42717"/>
    </physiologicalReaction>
</comment>
<comment type="catalytic activity">
    <reaction evidence="1">
        <text>5-methylaminomethyl-2-thiouridine(34) in tRNA + (2E)-geranyl diphosphate = 5-methylaminomethyl-S-(2E)-geranyl-thiouridine(34) in tRNA + diphosphate</text>
        <dbReference type="Rhea" id="RHEA:14085"/>
        <dbReference type="Rhea" id="RHEA-COMP:10195"/>
        <dbReference type="Rhea" id="RHEA-COMP:14654"/>
        <dbReference type="ChEBI" id="CHEBI:33019"/>
        <dbReference type="ChEBI" id="CHEBI:58057"/>
        <dbReference type="ChEBI" id="CHEBI:74455"/>
        <dbReference type="ChEBI" id="CHEBI:140632"/>
    </reaction>
    <physiologicalReaction direction="left-to-right" evidence="1">
        <dbReference type="Rhea" id="RHEA:14086"/>
    </physiologicalReaction>
</comment>
<comment type="catalytic activity">
    <reaction evidence="1">
        <text>5-methylaminomethyl-S-(2E)-geranyl-thiouridine(34) in tRNA + selenophosphate + H(+) = 5-methylaminomethyl-2-(Se-phospho)selenouridine(34) in tRNA + (2E)-thiogeraniol</text>
        <dbReference type="Rhea" id="RHEA:60172"/>
        <dbReference type="Rhea" id="RHEA-COMP:14654"/>
        <dbReference type="Rhea" id="RHEA-COMP:15523"/>
        <dbReference type="ChEBI" id="CHEBI:15378"/>
        <dbReference type="ChEBI" id="CHEBI:16144"/>
        <dbReference type="ChEBI" id="CHEBI:140632"/>
        <dbReference type="ChEBI" id="CHEBI:143702"/>
        <dbReference type="ChEBI" id="CHEBI:143703"/>
    </reaction>
    <physiologicalReaction direction="left-to-right" evidence="1">
        <dbReference type="Rhea" id="RHEA:60173"/>
    </physiologicalReaction>
</comment>
<comment type="catalytic activity">
    <reaction evidence="1">
        <text>5-methylaminomethyl-2-(Se-phospho)selenouridine(34) in tRNA + H2O = 5-methylaminomethyl-2-selenouridine(34) in tRNA + phosphate</text>
        <dbReference type="Rhea" id="RHEA:60176"/>
        <dbReference type="Rhea" id="RHEA-COMP:10196"/>
        <dbReference type="Rhea" id="RHEA-COMP:15523"/>
        <dbReference type="ChEBI" id="CHEBI:15377"/>
        <dbReference type="ChEBI" id="CHEBI:43474"/>
        <dbReference type="ChEBI" id="CHEBI:82743"/>
        <dbReference type="ChEBI" id="CHEBI:143702"/>
    </reaction>
    <physiologicalReaction direction="left-to-right" evidence="1">
        <dbReference type="Rhea" id="RHEA:60177"/>
    </physiologicalReaction>
</comment>
<comment type="subunit">
    <text evidence="1">Monomer.</text>
</comment>
<comment type="similarity">
    <text evidence="1">Belongs to the SelU family.</text>
</comment>
<organism>
    <name type="scientific">Pseudomonas aeruginosa (strain LESB58)</name>
    <dbReference type="NCBI Taxonomy" id="557722"/>
    <lineage>
        <taxon>Bacteria</taxon>
        <taxon>Pseudomonadati</taxon>
        <taxon>Pseudomonadota</taxon>
        <taxon>Gammaproteobacteria</taxon>
        <taxon>Pseudomonadales</taxon>
        <taxon>Pseudomonadaceae</taxon>
        <taxon>Pseudomonas</taxon>
    </lineage>
</organism>
<reference key="1">
    <citation type="journal article" date="2009" name="Genome Res.">
        <title>Newly introduced genomic prophage islands are critical determinants of in vivo competitiveness in the Liverpool epidemic strain of Pseudomonas aeruginosa.</title>
        <authorList>
            <person name="Winstanley C."/>
            <person name="Langille M.G.I."/>
            <person name="Fothergill J.L."/>
            <person name="Kukavica-Ibrulj I."/>
            <person name="Paradis-Bleau C."/>
            <person name="Sanschagrin F."/>
            <person name="Thomson N.R."/>
            <person name="Winsor G.L."/>
            <person name="Quail M.A."/>
            <person name="Lennard N."/>
            <person name="Bignell A."/>
            <person name="Clarke L."/>
            <person name="Seeger K."/>
            <person name="Saunders D."/>
            <person name="Harris D."/>
            <person name="Parkhill J."/>
            <person name="Hancock R.E.W."/>
            <person name="Brinkman F.S.L."/>
            <person name="Levesque R.C."/>
        </authorList>
    </citation>
    <scope>NUCLEOTIDE SEQUENCE [LARGE SCALE GENOMIC DNA]</scope>
    <source>
        <strain>LESB58</strain>
    </source>
</reference>
<proteinExistence type="inferred from homology"/>
<dbReference type="EC" id="2.9.1.3" evidence="1"/>
<dbReference type="EMBL" id="FM209186">
    <property type="protein sequence ID" value="CAW28411.1"/>
    <property type="molecule type" value="Genomic_DNA"/>
</dbReference>
<dbReference type="SMR" id="B7UV78"/>
<dbReference type="KEGG" id="pag:PLES_36841"/>
<dbReference type="HOGENOM" id="CLU_043456_1_0_6"/>
<dbReference type="GO" id="GO:0016765">
    <property type="term" value="F:transferase activity, transferring alkyl or aryl (other than methyl) groups"/>
    <property type="evidence" value="ECO:0007669"/>
    <property type="project" value="UniProtKB-UniRule"/>
</dbReference>
<dbReference type="GO" id="GO:0043828">
    <property type="term" value="F:tRNA 2-selenouridine synthase activity"/>
    <property type="evidence" value="ECO:0007669"/>
    <property type="project" value="UniProtKB-EC"/>
</dbReference>
<dbReference type="GO" id="GO:0002098">
    <property type="term" value="P:tRNA wobble uridine modification"/>
    <property type="evidence" value="ECO:0007669"/>
    <property type="project" value="UniProtKB-UniRule"/>
</dbReference>
<dbReference type="CDD" id="cd01520">
    <property type="entry name" value="RHOD_YbbB"/>
    <property type="match status" value="1"/>
</dbReference>
<dbReference type="FunFam" id="3.40.250.10:FF:000009">
    <property type="entry name" value="tRNA 2-selenouridine/geranyl-2-thiouridine synthase"/>
    <property type="match status" value="1"/>
</dbReference>
<dbReference type="Gene3D" id="3.40.250.10">
    <property type="entry name" value="Rhodanese-like domain"/>
    <property type="match status" value="1"/>
</dbReference>
<dbReference type="HAMAP" id="MF_01622">
    <property type="entry name" value="tRNA_sel_U_synth"/>
    <property type="match status" value="1"/>
</dbReference>
<dbReference type="InterPro" id="IPR027417">
    <property type="entry name" value="P-loop_NTPase"/>
</dbReference>
<dbReference type="InterPro" id="IPR001763">
    <property type="entry name" value="Rhodanese-like_dom"/>
</dbReference>
<dbReference type="InterPro" id="IPR036873">
    <property type="entry name" value="Rhodanese-like_dom_sf"/>
</dbReference>
<dbReference type="InterPro" id="IPR017582">
    <property type="entry name" value="SelU"/>
</dbReference>
<dbReference type="NCBIfam" id="NF008751">
    <property type="entry name" value="PRK11784.1-3"/>
    <property type="match status" value="1"/>
</dbReference>
<dbReference type="NCBIfam" id="TIGR03167">
    <property type="entry name" value="tRNA_sel_U_synt"/>
    <property type="match status" value="1"/>
</dbReference>
<dbReference type="PANTHER" id="PTHR30401">
    <property type="entry name" value="TRNA 2-SELENOURIDINE SYNTHASE"/>
    <property type="match status" value="1"/>
</dbReference>
<dbReference type="PANTHER" id="PTHR30401:SF0">
    <property type="entry name" value="TRNA 2-SELENOURIDINE SYNTHASE"/>
    <property type="match status" value="1"/>
</dbReference>
<dbReference type="SMART" id="SM00450">
    <property type="entry name" value="RHOD"/>
    <property type="match status" value="1"/>
</dbReference>
<dbReference type="SUPFAM" id="SSF52540">
    <property type="entry name" value="P-loop containing nucleoside triphosphate hydrolases"/>
    <property type="match status" value="1"/>
</dbReference>
<dbReference type="SUPFAM" id="SSF52821">
    <property type="entry name" value="Rhodanese/Cell cycle control phosphatase"/>
    <property type="match status" value="1"/>
</dbReference>
<dbReference type="PROSITE" id="PS50206">
    <property type="entry name" value="RHODANESE_3"/>
    <property type="match status" value="1"/>
</dbReference>
<feature type="chain" id="PRO_1000186077" description="tRNA 2-selenouridine synthase">
    <location>
        <begin position="1"/>
        <end position="369"/>
    </location>
</feature>
<feature type="domain" description="Rhodanese" evidence="1">
    <location>
        <begin position="12"/>
        <end position="136"/>
    </location>
</feature>
<feature type="active site" description="S-selanylcysteine intermediate" evidence="1">
    <location>
        <position position="95"/>
    </location>
</feature>
<gene>
    <name evidence="1" type="primary">selU</name>
    <name type="ordered locus">PLES_36841</name>
</gene>
<accession>B7UV78</accession>
<keyword id="KW-0711">Selenium</keyword>
<keyword id="KW-0808">Transferase</keyword>
<evidence type="ECO:0000255" key="1">
    <source>
        <dbReference type="HAMAP-Rule" id="MF_01622"/>
    </source>
</evidence>
<protein>
    <recommendedName>
        <fullName evidence="1">tRNA 2-selenouridine synthase</fullName>
        <ecNumber evidence="1">2.9.1.3</ecNumber>
    </recommendedName>
</protein>
<sequence>MRDNTQHYRELFLDDIPLMDVRAPVEYHKGAFPNTVNRPLMNDIERQKVGTSYKQHGQQAAIALGHELVCGALKAERLAAWKAFAEANPNGYLYCFRGGLRSQIVQQWLKQDAGIDYPRVIGGYKALRNFLFETTRAAVDECDFVLVGGLTGCGKTEVIAALDNSLDLEGHANHRGSSFGRRATPQPAQIDFENRLAIDILKKRHRGVGQFVLEDEGRIVGSCSLPLELYQGMQSYPLVWLEDAFEQRVERILRDYVIDLRSEFERVVGVEEGFAAFSAYLQKSLAGIVKRLGGERYQRLAAILVQALEEQGRDGSVDTHRGWIEGLLKEYYDPMYAFQRQSKEDRVEFRGNQAEVIGYLRQRQALRPS</sequence>
<name>SELU_PSEA8</name>